<gene>
    <name type="primary">tps-1</name>
</gene>
<keyword id="KW-0025">Alternative splicing</keyword>
<keyword id="KW-0328">Glycosyltransferase</keyword>
<keyword id="KW-0808">Transferase</keyword>
<proteinExistence type="evidence at transcript level"/>
<evidence type="ECO:0000250" key="1"/>
<evidence type="ECO:0000256" key="2">
    <source>
        <dbReference type="SAM" id="MobiDB-lite"/>
    </source>
</evidence>
<evidence type="ECO:0000303" key="3">
    <source>
    </source>
</evidence>
<evidence type="ECO:0000305" key="4"/>
<protein>
    <recommendedName>
        <fullName>Alpha,alpha-trehalose-phosphate synthase [UDP-forming] 1</fullName>
        <ecNumber>2.4.1.15</ecNumber>
    </recommendedName>
    <alternativeName>
        <fullName>Trehalose-6-phosphate synthase 1</fullName>
    </alternativeName>
    <alternativeName>
        <fullName>UDP-glucose-glucosephosphate glucosyltransferase 1</fullName>
    </alternativeName>
</protein>
<dbReference type="EC" id="2.4.1.15"/>
<dbReference type="EMBL" id="AJ811568">
    <property type="protein sequence ID" value="CAH18873.1"/>
    <property type="molecule type" value="mRNA"/>
</dbReference>
<dbReference type="EMBL" id="AJ811569">
    <property type="protein sequence ID" value="CAH18874.1"/>
    <property type="molecule type" value="mRNA"/>
</dbReference>
<dbReference type="SMR" id="Q5K2C4"/>
<dbReference type="CAZy" id="GT20">
    <property type="family name" value="Glycosyltransferase Family 20"/>
</dbReference>
<dbReference type="GO" id="GO:0005829">
    <property type="term" value="C:cytosol"/>
    <property type="evidence" value="ECO:0007669"/>
    <property type="project" value="TreeGrafter"/>
</dbReference>
<dbReference type="GO" id="GO:0003825">
    <property type="term" value="F:alpha,alpha-trehalose-phosphate synthase (UDP-forming) activity"/>
    <property type="evidence" value="ECO:0007669"/>
    <property type="project" value="UniProtKB-EC"/>
</dbReference>
<dbReference type="GO" id="GO:0004805">
    <property type="term" value="F:trehalose-phosphatase activity"/>
    <property type="evidence" value="ECO:0007669"/>
    <property type="project" value="TreeGrafter"/>
</dbReference>
<dbReference type="GO" id="GO:0005992">
    <property type="term" value="P:trehalose biosynthetic process"/>
    <property type="evidence" value="ECO:0007669"/>
    <property type="project" value="InterPro"/>
</dbReference>
<dbReference type="CDD" id="cd03788">
    <property type="entry name" value="GT20_TPS"/>
    <property type="match status" value="1"/>
</dbReference>
<dbReference type="FunFam" id="3.40.50.2000:FF:000206">
    <property type="entry name" value="Trehalose-6-phosphate synthase"/>
    <property type="match status" value="1"/>
</dbReference>
<dbReference type="Gene3D" id="1.20.58.1800">
    <property type="match status" value="1"/>
</dbReference>
<dbReference type="Gene3D" id="3.30.70.3080">
    <property type="match status" value="1"/>
</dbReference>
<dbReference type="Gene3D" id="3.40.50.2000">
    <property type="entry name" value="Glycogen Phosphorylase B"/>
    <property type="match status" value="3"/>
</dbReference>
<dbReference type="Gene3D" id="3.40.50.1000">
    <property type="entry name" value="HAD superfamily/HAD-like"/>
    <property type="match status" value="1"/>
</dbReference>
<dbReference type="InterPro" id="IPR001830">
    <property type="entry name" value="Glyco_trans_20"/>
</dbReference>
<dbReference type="InterPro" id="IPR036412">
    <property type="entry name" value="HAD-like_sf"/>
</dbReference>
<dbReference type="InterPro" id="IPR023214">
    <property type="entry name" value="HAD_sf"/>
</dbReference>
<dbReference type="InterPro" id="IPR049063">
    <property type="entry name" value="T6PP_C"/>
</dbReference>
<dbReference type="InterPro" id="IPR041064">
    <property type="entry name" value="T6PP_helical"/>
</dbReference>
<dbReference type="PANTHER" id="PTHR10788:SF110">
    <property type="entry name" value="ALPHA,ALPHA-TREHALOSE-PHOSPHATE SYNTHASE [UDP-FORMING] 2"/>
    <property type="match status" value="1"/>
</dbReference>
<dbReference type="PANTHER" id="PTHR10788">
    <property type="entry name" value="TREHALOSE-6-PHOSPHATE SYNTHASE"/>
    <property type="match status" value="1"/>
</dbReference>
<dbReference type="Pfam" id="PF00982">
    <property type="entry name" value="Glyco_transf_20"/>
    <property type="match status" value="1"/>
</dbReference>
<dbReference type="Pfam" id="PF21141">
    <property type="entry name" value="T6PP_C"/>
    <property type="match status" value="1"/>
</dbReference>
<dbReference type="Pfam" id="PF18572">
    <property type="entry name" value="T6PP_N"/>
    <property type="match status" value="1"/>
</dbReference>
<dbReference type="SUPFAM" id="SSF56784">
    <property type="entry name" value="HAD-like"/>
    <property type="match status" value="1"/>
</dbReference>
<dbReference type="SUPFAM" id="SSF53756">
    <property type="entry name" value="UDP-Glycosyltransferase/glycogen phosphorylase"/>
    <property type="match status" value="1"/>
</dbReference>
<name>TPS1_APHAV</name>
<sequence length="1155" mass="130891">MSHGTKYRDALLFSLTLYDVNTGKSRLKELYAAVPGIRKSLLGVHAKRFGEQYHHLQRRRSVSSRGGSLRGSMDSLNDSGQNGAEDVIGVEDEEEAQKFRGKRTSISLDPAAAGEVMFTIEDGACFPSGGLANTHFQQRVINVSNAPPVSLKREKSGEWEIKQGSGGLVSCVDPIMSVNQENMWLANLGMNIDKKKMLRSTELLNVTDDSAPLAPATNTLGLPLMRQALADVLFHVIADDDIKEQNEDEQSRNVRWGHSSVEAGGVAPSQPWEEMSLLGVLNQYNRSNYKLNPVVVQEQDYNVYYGGISNGLLWPALHNLPEYIVADYDDPKVLYEHWCAYVRVNYQFAIDAVRNSRPQDFIWIHDYHLMLTGMIMQSLDSSLEIGFFLHIPFLPPDNFFTKYRLCAFPIMRGLLRFTKVGFQTHRDRAKFVELVGIHLPTARVTYDEKMDIHTVTYQGWSCSLGVFPVSIKNEDFLKVAQSAETIKKADDIRKEILGETPVDSARLLFSVERFDYTKGIKEKLLAYRRYFERHPDRIGKDVLYQVAVTNRRSVDTYRMYQDECIQMAEDINREFATDEYPNWKPLIFRTDGLQRADLVAHYLAMDVGVVTPKKDGMNLVAKEMLVCNPSAGLVLSTGAGSEIQFTMAGLHPDDGDKCYHRVVDVYDADHYADAFYEAAVEPEGERAAHGQRLNEFIMNNDIERWSTAFLDPGWSHLVIRQSEIKDLDDFYSLMMRTRDVRRQIVERVLKGIPIRSHFSISLSNTKESLLLACQPGTRTLHLKPSLEEDEQTEPAHFDIANELDEFEKDLNFMKFIQSDDVYNVEQFINSLQEYHPVSADKFRDEVIELGDVLTEADHFNFFFTDRDGTLKSYSCSYPASIQPAYSGVIQAQFARRCAQTCAIVTTAPLMRIGVLDVSTIPEGYYYFGASAGREWFIDPANKFKDQSIPEEDLELLERVFAAISDLLEEPKFKHFTWVGSGLQKHYGHITIAHQDAFNSVPRHQVRAIDQKIKDIIHRIDPDQHTLKVKETETDIKIFLKSESGEIFDKGQGIRLLVEHMKCDISNGTILVCGDSSTDLPMLQACLEANPSGVYTVWVTRSDELKTTVRELCERFGNKNFVFVSCPEVLLGGMAQATIREISIGRPGPRASHDSE</sequence>
<feature type="chain" id="PRO_0000385173" description="Alpha,alpha-trehalose-phosphate synthase [UDP-forming] 1">
    <location>
        <begin position="1"/>
        <end position="1155"/>
    </location>
</feature>
<feature type="region of interest" description="Disordered" evidence="2">
    <location>
        <begin position="56"/>
        <end position="94"/>
    </location>
</feature>
<feature type="compositionally biased region" description="Low complexity" evidence="2">
    <location>
        <begin position="63"/>
        <end position="72"/>
    </location>
</feature>
<feature type="splice variant" id="VSP_038109" description="In isoform b." evidence="3">
    <location>
        <begin position="1"/>
        <end position="175"/>
    </location>
</feature>
<accession>Q5K2C4</accession>
<accession>Q5K2C3</accession>
<comment type="function">
    <text evidence="1">Catalyzes the production of trehalose from glucose-6-phosphate and UDP-alpha-D-glucose in a 2 step process.</text>
</comment>
<comment type="catalytic activity">
    <reaction>
        <text>D-glucose 6-phosphate + UDP-alpha-D-glucose = alpha,alpha-trehalose 6-phosphate + UDP + H(+)</text>
        <dbReference type="Rhea" id="RHEA:18889"/>
        <dbReference type="ChEBI" id="CHEBI:15378"/>
        <dbReference type="ChEBI" id="CHEBI:58223"/>
        <dbReference type="ChEBI" id="CHEBI:58429"/>
        <dbReference type="ChEBI" id="CHEBI:58885"/>
        <dbReference type="ChEBI" id="CHEBI:61548"/>
        <dbReference type="EC" id="2.4.1.15"/>
    </reaction>
</comment>
<comment type="alternative products">
    <event type="alternative splicing"/>
    <isoform>
        <id>Q5K2C4-1</id>
        <name>a</name>
        <sequence type="displayed"/>
    </isoform>
    <isoform>
        <id>Q5K2C4-2</id>
        <name>b</name>
        <sequence type="described" ref="VSP_038109"/>
    </isoform>
</comment>
<comment type="similarity">
    <text evidence="4">In the N-terminal section; belongs to the glycosyltransferase 20 family.</text>
</comment>
<comment type="similarity">
    <text evidence="4">In the C-terminal section; belongs to the gob-1 trehalose phosphatase family.</text>
</comment>
<organism>
    <name type="scientific">Aphelenchoides avenae</name>
    <name type="common">Mycophagous nematode worm</name>
    <name type="synonym">Aphelenchus avenae</name>
    <dbReference type="NCBI Taxonomy" id="70226"/>
    <lineage>
        <taxon>Eukaryota</taxon>
        <taxon>Metazoa</taxon>
        <taxon>Ecdysozoa</taxon>
        <taxon>Nematoda</taxon>
        <taxon>Chromadorea</taxon>
        <taxon>Rhabditida</taxon>
        <taxon>Tylenchina</taxon>
        <taxon>Tylenchomorpha</taxon>
        <taxon>Aphelenchoidea</taxon>
        <taxon>Aphelenchoididae</taxon>
        <taxon>Aphelenchoides</taxon>
    </lineage>
</organism>
<reference key="1">
    <citation type="journal article" date="2005" name="Biochimie">
        <title>Dehydration-induced tps gene transcripts from an anhydrobiotic nematode contain novel spliced leaders and encode atypical GT-20 family proteins.</title>
        <authorList>
            <person name="Goyal K."/>
            <person name="Browne J.A."/>
            <person name="Burnell A.M."/>
            <person name="Tunnacliffe A."/>
        </authorList>
    </citation>
    <scope>NUCLEOTIDE SEQUENCE [MRNA] (ISOFORMS A AND B)</scope>
</reference>